<comment type="subcellular location">
    <subcellularLocation>
        <location evidence="2">Membrane</location>
        <topology evidence="2">Single-pass membrane protein</topology>
    </subcellularLocation>
</comment>
<evidence type="ECO:0000255" key="1"/>
<evidence type="ECO:0000305" key="2"/>
<organismHost>
    <name type="scientific">Acanthamoeba polyphaga</name>
    <name type="common">Amoeba</name>
    <dbReference type="NCBI Taxonomy" id="5757"/>
</organismHost>
<accession>Q5UQV2</accession>
<gene>
    <name type="ordered locus">MIMI_R372</name>
</gene>
<feature type="chain" id="PRO_0000251115" description="Uncharacterized protein R372">
    <location>
        <begin position="1"/>
        <end position="250"/>
    </location>
</feature>
<feature type="transmembrane region" description="Helical" evidence="1">
    <location>
        <begin position="2"/>
        <end position="22"/>
    </location>
</feature>
<protein>
    <recommendedName>
        <fullName>Uncharacterized protein R372</fullName>
    </recommendedName>
</protein>
<organism>
    <name type="scientific">Acanthamoeba polyphaga mimivirus</name>
    <name type="common">APMV</name>
    <dbReference type="NCBI Taxonomy" id="212035"/>
    <lineage>
        <taxon>Viruses</taxon>
        <taxon>Varidnaviria</taxon>
        <taxon>Bamfordvirae</taxon>
        <taxon>Nucleocytoviricota</taxon>
        <taxon>Megaviricetes</taxon>
        <taxon>Imitervirales</taxon>
        <taxon>Mimiviridae</taxon>
        <taxon>Megamimivirinae</taxon>
        <taxon>Mimivirus</taxon>
        <taxon>Mimivirus bradfordmassiliense</taxon>
    </lineage>
</organism>
<proteinExistence type="predicted"/>
<keyword id="KW-0472">Membrane</keyword>
<keyword id="KW-1185">Reference proteome</keyword>
<keyword id="KW-0812">Transmembrane</keyword>
<keyword id="KW-1133">Transmembrane helix</keyword>
<reference key="1">
    <citation type="journal article" date="2004" name="Science">
        <title>The 1.2-megabase genome sequence of Mimivirus.</title>
        <authorList>
            <person name="Raoult D."/>
            <person name="Audic S."/>
            <person name="Robert C."/>
            <person name="Abergel C."/>
            <person name="Renesto P."/>
            <person name="Ogata H."/>
            <person name="La Scola B."/>
            <person name="Susan M."/>
            <person name="Claverie J.-M."/>
        </authorList>
    </citation>
    <scope>NUCLEOTIDE SEQUENCE [LARGE SCALE GENOMIC DNA]</scope>
    <source>
        <strain>Rowbotham-Bradford</strain>
    </source>
</reference>
<dbReference type="EMBL" id="AY653733">
    <property type="protein sequence ID" value="AAV50641.1"/>
    <property type="molecule type" value="Genomic_DNA"/>
</dbReference>
<dbReference type="SMR" id="Q5UQV2"/>
<dbReference type="KEGG" id="vg:9924994"/>
<dbReference type="Proteomes" id="UP000001134">
    <property type="component" value="Genome"/>
</dbReference>
<dbReference type="GO" id="GO:0016020">
    <property type="term" value="C:membrane"/>
    <property type="evidence" value="ECO:0007669"/>
    <property type="project" value="UniProtKB-SubCell"/>
</dbReference>
<dbReference type="Gene3D" id="3.90.1720.10">
    <property type="entry name" value="endopeptidase domain like (from Nostoc punctiforme)"/>
    <property type="match status" value="1"/>
</dbReference>
<dbReference type="InterPro" id="IPR038765">
    <property type="entry name" value="Papain-like_cys_pep_sf"/>
</dbReference>
<dbReference type="SUPFAM" id="SSF54001">
    <property type="entry name" value="Cysteine proteinases"/>
    <property type="match status" value="1"/>
</dbReference>
<sequence>MILRIIIFVIIILVVSLLLIYFVNKKPIINTQIENYSDIKNKFKTGDIILFSCRKHNTFIDEIKYFSRTKLIGSEFGHVGLILRDKKKLYVIEFTDYEHPGDQVAKRYHDLGKGGMRVIELETALREYNKDHMGCYAVRFISQEIPNDIFYDKIKKHRHKIFESKPKLLLLAFIDMLVMHKMSSDLATIFHNEDRMTCGEFVHTVLNDCNAIADYPSKIFWPYIVEDSDFNKILRSDISYSRLVKFIFDP</sequence>
<name>YR372_MIMIV</name>